<name>RL28_BEUC1</name>
<dbReference type="EMBL" id="CP001618">
    <property type="protein sequence ID" value="ACQ79855.1"/>
    <property type="molecule type" value="Genomic_DNA"/>
</dbReference>
<dbReference type="RefSeq" id="WP_015882095.1">
    <property type="nucleotide sequence ID" value="NC_012669.1"/>
</dbReference>
<dbReference type="SMR" id="C5C3F6"/>
<dbReference type="STRING" id="471853.Bcav_1599"/>
<dbReference type="KEGG" id="bcv:Bcav_1599"/>
<dbReference type="eggNOG" id="COG0227">
    <property type="taxonomic scope" value="Bacteria"/>
</dbReference>
<dbReference type="HOGENOM" id="CLU_064548_7_0_11"/>
<dbReference type="OrthoDB" id="9805609at2"/>
<dbReference type="Proteomes" id="UP000007962">
    <property type="component" value="Chromosome"/>
</dbReference>
<dbReference type="GO" id="GO:1990904">
    <property type="term" value="C:ribonucleoprotein complex"/>
    <property type="evidence" value="ECO:0007669"/>
    <property type="project" value="UniProtKB-KW"/>
</dbReference>
<dbReference type="GO" id="GO:0005840">
    <property type="term" value="C:ribosome"/>
    <property type="evidence" value="ECO:0007669"/>
    <property type="project" value="UniProtKB-KW"/>
</dbReference>
<dbReference type="GO" id="GO:0003735">
    <property type="term" value="F:structural constituent of ribosome"/>
    <property type="evidence" value="ECO:0007669"/>
    <property type="project" value="InterPro"/>
</dbReference>
<dbReference type="GO" id="GO:0006412">
    <property type="term" value="P:translation"/>
    <property type="evidence" value="ECO:0007669"/>
    <property type="project" value="UniProtKB-UniRule"/>
</dbReference>
<dbReference type="FunFam" id="2.30.170.40:FF:000002">
    <property type="entry name" value="50S ribosomal protein L28"/>
    <property type="match status" value="1"/>
</dbReference>
<dbReference type="Gene3D" id="2.30.170.40">
    <property type="entry name" value="Ribosomal protein L28/L24"/>
    <property type="match status" value="1"/>
</dbReference>
<dbReference type="HAMAP" id="MF_00373">
    <property type="entry name" value="Ribosomal_bL28"/>
    <property type="match status" value="1"/>
</dbReference>
<dbReference type="InterPro" id="IPR050096">
    <property type="entry name" value="Bacterial_rp_bL28"/>
</dbReference>
<dbReference type="InterPro" id="IPR026569">
    <property type="entry name" value="Ribosomal_bL28"/>
</dbReference>
<dbReference type="InterPro" id="IPR034704">
    <property type="entry name" value="Ribosomal_bL28/bL31-like_sf"/>
</dbReference>
<dbReference type="InterPro" id="IPR001383">
    <property type="entry name" value="Ribosomal_bL28_bact-type"/>
</dbReference>
<dbReference type="InterPro" id="IPR037147">
    <property type="entry name" value="Ribosomal_bL28_sf"/>
</dbReference>
<dbReference type="NCBIfam" id="TIGR00009">
    <property type="entry name" value="L28"/>
    <property type="match status" value="1"/>
</dbReference>
<dbReference type="PANTHER" id="PTHR39080">
    <property type="entry name" value="50S RIBOSOMAL PROTEIN L28"/>
    <property type="match status" value="1"/>
</dbReference>
<dbReference type="PANTHER" id="PTHR39080:SF1">
    <property type="entry name" value="LARGE RIBOSOMAL SUBUNIT PROTEIN BL28A"/>
    <property type="match status" value="1"/>
</dbReference>
<dbReference type="Pfam" id="PF00830">
    <property type="entry name" value="Ribosomal_L28"/>
    <property type="match status" value="1"/>
</dbReference>
<dbReference type="SUPFAM" id="SSF143800">
    <property type="entry name" value="L28p-like"/>
    <property type="match status" value="1"/>
</dbReference>
<organism>
    <name type="scientific">Beutenbergia cavernae (strain ATCC BAA-8 / DSM 12333 / CCUG 43141 / JCM 11478 / NBRC 16432 / NCIMB 13614 / HKI 0122)</name>
    <dbReference type="NCBI Taxonomy" id="471853"/>
    <lineage>
        <taxon>Bacteria</taxon>
        <taxon>Bacillati</taxon>
        <taxon>Actinomycetota</taxon>
        <taxon>Actinomycetes</taxon>
        <taxon>Micrococcales</taxon>
        <taxon>Beutenbergiaceae</taxon>
        <taxon>Beutenbergia</taxon>
    </lineage>
</organism>
<gene>
    <name evidence="1" type="primary">rpmB</name>
    <name type="ordered locus">Bcav_1599</name>
</gene>
<comment type="similarity">
    <text evidence="1">Belongs to the bacterial ribosomal protein bL28 family.</text>
</comment>
<sequence length="63" mass="6981">MAATCDVCAKHPSFGYSVSHSHVRTKRRWNPNIQKVRTVVNGTPKRLNVCTSCLKAGKVTRAL</sequence>
<proteinExistence type="inferred from homology"/>
<protein>
    <recommendedName>
        <fullName evidence="1">Large ribosomal subunit protein bL28</fullName>
    </recommendedName>
    <alternativeName>
        <fullName evidence="2">50S ribosomal protein L28</fullName>
    </alternativeName>
</protein>
<reference key="1">
    <citation type="journal article" date="2009" name="Stand. Genomic Sci.">
        <title>Complete genome sequence of Beutenbergia cavernae type strain (HKI 0122).</title>
        <authorList>
            <person name="Land M."/>
            <person name="Pukall R."/>
            <person name="Abt B."/>
            <person name="Goker M."/>
            <person name="Rohde M."/>
            <person name="Glavina Del Rio T."/>
            <person name="Tice H."/>
            <person name="Copeland A."/>
            <person name="Cheng J.F."/>
            <person name="Lucas S."/>
            <person name="Chen F."/>
            <person name="Nolan M."/>
            <person name="Bruce D."/>
            <person name="Goodwin L."/>
            <person name="Pitluck S."/>
            <person name="Ivanova N."/>
            <person name="Mavromatis K."/>
            <person name="Ovchinnikova G."/>
            <person name="Pati A."/>
            <person name="Chen A."/>
            <person name="Palaniappan K."/>
            <person name="Hauser L."/>
            <person name="Chang Y.J."/>
            <person name="Jefferies C.C."/>
            <person name="Saunders E."/>
            <person name="Brettin T."/>
            <person name="Detter J.C."/>
            <person name="Han C."/>
            <person name="Chain P."/>
            <person name="Bristow J."/>
            <person name="Eisen J.A."/>
            <person name="Markowitz V."/>
            <person name="Hugenholtz P."/>
            <person name="Kyrpides N.C."/>
            <person name="Klenk H.P."/>
            <person name="Lapidus A."/>
        </authorList>
    </citation>
    <scope>NUCLEOTIDE SEQUENCE [LARGE SCALE GENOMIC DNA]</scope>
    <source>
        <strain>ATCC BAA-8 / DSM 12333 / CCUG 43141 / JCM 11478 / NBRC 16432 / NCIMB 13614 / HKI 0122</strain>
    </source>
</reference>
<feature type="chain" id="PRO_1000205588" description="Large ribosomal subunit protein bL28">
    <location>
        <begin position="1"/>
        <end position="63"/>
    </location>
</feature>
<evidence type="ECO:0000255" key="1">
    <source>
        <dbReference type="HAMAP-Rule" id="MF_00373"/>
    </source>
</evidence>
<evidence type="ECO:0000305" key="2"/>
<keyword id="KW-1185">Reference proteome</keyword>
<keyword id="KW-0687">Ribonucleoprotein</keyword>
<keyword id="KW-0689">Ribosomal protein</keyword>
<accession>C5C3F6</accession>